<proteinExistence type="evidence at protein level"/>
<organismHost>
    <name type="scientific">Pseudomonas aeruginosa</name>
    <dbReference type="NCBI Taxonomy" id="287"/>
</organismHost>
<protein>
    <recommendedName>
        <fullName>Maturation protein A</fullName>
        <shortName>MP</shortName>
    </recommendedName>
    <alternativeName>
        <fullName>Assembly protein</fullName>
        <shortName>A protein</shortName>
    </alternativeName>
</protein>
<comment type="function">
    <text evidence="1">The maturation protein is required for the typical attachment of the phage to the side of the bacterial F-pili. Binds to sequences located toward each end of the genome, hence circularizing it. The RNA genome-maturation protein A complex is released from the capsid upon host receptor binding. Maturation protein A enters the cell along with the viral RNA.</text>
</comment>
<comment type="subunit">
    <text evidence="1">Interacts with the host pilus.</text>
</comment>
<comment type="subcellular location">
    <subcellularLocation>
        <location evidence="1">Virion</location>
    </subcellularLocation>
    <text evidence="1">A single copy of the maturation protein is present in the virion and replaces a coat protein dimer at one of the icosahedral two-fold axes.</text>
</comment>
<comment type="similarity">
    <text evidence="3">Belongs to the Leviviricetes maturation protein family.</text>
</comment>
<feature type="chain" id="PRO_0000458135" description="Maturation protein A">
    <location>
        <begin position="1"/>
        <end position="449"/>
    </location>
</feature>
<feature type="site" description="Essential for infectivity" evidence="2">
    <location>
        <position position="360"/>
    </location>
</feature>
<feature type="sequence variant" description="Associated with poor plaque morphology.">
    <original>R</original>
    <variation>Q</variation>
    <location>
        <position position="349"/>
    </location>
</feature>
<feature type="sequence variant" description="Associated with defect in the steps after adsorption.">
    <original>S</original>
    <variation>C</variation>
    <location>
        <position position="360"/>
    </location>
</feature>
<accession>Q38061</accession>
<dbReference type="EMBL" id="X80191">
    <property type="protein sequence ID" value="CAA56472.1"/>
    <property type="status" value="ALT_SEQ"/>
    <property type="molecule type" value="Genomic_RNA"/>
</dbReference>
<dbReference type="PIR" id="S46975">
    <property type="entry name" value="S46975"/>
</dbReference>
<dbReference type="RefSeq" id="NP_042304.1">
    <property type="nucleotide sequence ID" value="NC_001628.1"/>
</dbReference>
<dbReference type="PDB" id="8TUW">
    <property type="method" value="EM"/>
    <property type="resolution" value="7.90 A"/>
    <property type="chains" value="M1=2-449"/>
</dbReference>
<dbReference type="PDB" id="8TUX">
    <property type="method" value="EM"/>
    <property type="resolution" value="3.90 A"/>
    <property type="chains" value="M/m=2-449"/>
</dbReference>
<dbReference type="PDBsum" id="8TUW"/>
<dbReference type="PDBsum" id="8TUX"/>
<dbReference type="EMDB" id="EMD-41633"/>
<dbReference type="SMR" id="Q38061"/>
<dbReference type="GeneID" id="1261105"/>
<dbReference type="KEGG" id="vg:1261105"/>
<dbReference type="OrthoDB" id="19507at10239"/>
<dbReference type="Proteomes" id="UP000002138">
    <property type="component" value="Genome"/>
</dbReference>
<dbReference type="GO" id="GO:0044423">
    <property type="term" value="C:virion component"/>
    <property type="evidence" value="ECO:0007669"/>
    <property type="project" value="UniProtKB-KW"/>
</dbReference>
<dbReference type="GO" id="GO:0039666">
    <property type="term" value="P:virion attachment to host cell pilus"/>
    <property type="evidence" value="ECO:0007669"/>
    <property type="project" value="UniProtKB-KW"/>
</dbReference>
<dbReference type="InterPro" id="IPR005563">
    <property type="entry name" value="A_protein"/>
</dbReference>
<dbReference type="Pfam" id="PF03863">
    <property type="entry name" value="Phage_mat-A"/>
    <property type="match status" value="1"/>
</dbReference>
<organism>
    <name type="scientific">Pseudomonas phage PP7</name>
    <name type="common">Bacteriophage PP7</name>
    <dbReference type="NCBI Taxonomy" id="12023"/>
    <lineage>
        <taxon>Viruses</taxon>
        <taxon>Riboviria</taxon>
        <taxon>Orthornavirae</taxon>
        <taxon>Lenarviricota</taxon>
        <taxon>Leviviricetes</taxon>
        <taxon>Norzivirales</taxon>
        <taxon>Fiersviridae</taxon>
        <taxon>Pepevirus</taxon>
        <taxon>Pepevirus rubrum</taxon>
    </lineage>
</organism>
<reference key="1">
    <citation type="journal article" date="1995" name="Virology">
        <title>Nucleotide sequence of a single-stranded RNA phage from Pseudomonas aeruginosa: kinship to coliphages and conservation of regulatory RNA structures.</title>
        <authorList>
            <person name="Olsthoorn R.C."/>
            <person name="Garde G."/>
            <person name="Dayhuff T."/>
            <person name="Atkins J.F."/>
            <person name="Van Duin J."/>
        </authorList>
    </citation>
    <scope>NUCLEOTIDE SEQUENCE [GENOMIC RNA]</scope>
</reference>
<reference key="2">
    <citation type="journal article" date="2021" name="J. Virol.">
        <title>cDNA-Derived RNA Phage Assembly Reveals Critical Residues in the Maturation Protein of the Pseudomonas aeruginosa Leviphage PP7.</title>
        <authorList>
            <person name="Kim E.S."/>
            <person name="Lee J.Y."/>
            <person name="Park C."/>
            <person name="Ahn S.J."/>
            <person name="Bae H.W."/>
            <person name="Cho Y.H."/>
        </authorList>
    </citation>
    <scope>VARIANTS GLN-349 AND CYS-360</scope>
</reference>
<sequence length="449" mass="50834">MLEEHYYSRKTCGSGGGLSVQRTGYPQTDPPVFKAVNSFERAPLIVGDHVHSLPYWSRKITLECTPYPFTLRWEGGVHKDGIPDKVPHPSCDPGSELVSYTHSREVDCERFIGPVPSSFTDPKVTSAQWKFLEDMADMKALADLNKSLVNLPMLYKERRETLKMVGNRLGGLVRVAHAAQDRDLKRYFKARRKDRRKVAEEVANGHLELIFGWLPLIGELEGAIEYAELPDLDFIRCHGLHTLVLQSTPWDNSVDVRSYPNWERAAGTRITGSVRTRGVVESRASVRTALRFNLETSLAGDARRLGFEPISTTYDMIPLSFVVGWFSNFDKYVRTLAPLIGVTFETGSRNRRTTCELVGSTRFYPRTVSPPSGWFARWKDFPDGSLSEVSGLRRTDIRSVLSTLPDPDVRFHADVGLFEISAGISLLAQRYLKPLQRLLKRKSFFYGRT</sequence>
<keyword id="KW-0002">3D-structure</keyword>
<keyword id="KW-0945">Host-virus interaction</keyword>
<keyword id="KW-1185">Reference proteome</keyword>
<keyword id="KW-1161">Viral attachment to host cell</keyword>
<keyword id="KW-1175">Viral attachment to host cell pilus</keyword>
<keyword id="KW-0946">Virion</keyword>
<keyword id="KW-1160">Virus entry into host cell</keyword>
<evidence type="ECO:0000250" key="1">
    <source>
        <dbReference type="UniProtKB" id="P03610"/>
    </source>
</evidence>
<evidence type="ECO:0000269" key="2">
    <source>
    </source>
</evidence>
<evidence type="ECO:0000305" key="3"/>
<name>MATA_BPPP7</name>